<accession>Q5L9Y1</accession>
<comment type="subcellular location">
    <subcellularLocation>
        <location evidence="1">Cytoplasm</location>
    </subcellularLocation>
</comment>
<comment type="similarity">
    <text evidence="1">Belongs to the CutC family.</text>
</comment>
<comment type="caution">
    <text evidence="1">Once thought to be involved in copper homeostasis, experiments in E.coli have shown this is not the case.</text>
</comment>
<proteinExistence type="inferred from homology"/>
<reference key="1">
    <citation type="journal article" date="2005" name="Science">
        <title>Extensive DNA inversions in the B. fragilis genome control variable gene expression.</title>
        <authorList>
            <person name="Cerdeno-Tarraga A.-M."/>
            <person name="Patrick S."/>
            <person name="Crossman L.C."/>
            <person name="Blakely G."/>
            <person name="Abratt V."/>
            <person name="Lennard N."/>
            <person name="Poxton I."/>
            <person name="Duerden B."/>
            <person name="Harris B."/>
            <person name="Quail M.A."/>
            <person name="Barron A."/>
            <person name="Clark L."/>
            <person name="Corton C."/>
            <person name="Doggett J."/>
            <person name="Holden M.T.G."/>
            <person name="Larke N."/>
            <person name="Line A."/>
            <person name="Lord A."/>
            <person name="Norbertczak H."/>
            <person name="Ormond D."/>
            <person name="Price C."/>
            <person name="Rabbinowitsch E."/>
            <person name="Woodward J."/>
            <person name="Barrell B.G."/>
            <person name="Parkhill J."/>
        </authorList>
    </citation>
    <scope>NUCLEOTIDE SEQUENCE [LARGE SCALE GENOMIC DNA]</scope>
    <source>
        <strain>ATCC 25285 / DSM 2151 / CCUG 4856 / JCM 11019 / LMG 10263 / NCTC 9343 / Onslow / VPI 2553 / EN-2</strain>
    </source>
</reference>
<organism>
    <name type="scientific">Bacteroides fragilis (strain ATCC 25285 / DSM 2151 / CCUG 4856 / JCM 11019 / LMG 10263 / NCTC 9343 / Onslow / VPI 2553 / EN-2)</name>
    <dbReference type="NCBI Taxonomy" id="272559"/>
    <lineage>
        <taxon>Bacteria</taxon>
        <taxon>Pseudomonadati</taxon>
        <taxon>Bacteroidota</taxon>
        <taxon>Bacteroidia</taxon>
        <taxon>Bacteroidales</taxon>
        <taxon>Bacteroidaceae</taxon>
        <taxon>Bacteroides</taxon>
    </lineage>
</organism>
<evidence type="ECO:0000255" key="1">
    <source>
        <dbReference type="HAMAP-Rule" id="MF_00795"/>
    </source>
</evidence>
<dbReference type="EMBL" id="CR626927">
    <property type="protein sequence ID" value="CAH09095.1"/>
    <property type="molecule type" value="Genomic_DNA"/>
</dbReference>
<dbReference type="RefSeq" id="WP_005797842.1">
    <property type="nucleotide sequence ID" value="NZ_UFTH01000001.1"/>
</dbReference>
<dbReference type="SMR" id="Q5L9Y1"/>
<dbReference type="PaxDb" id="272559-BF9343_3314"/>
<dbReference type="KEGG" id="bfs:BF9343_3314"/>
<dbReference type="eggNOG" id="COG3142">
    <property type="taxonomic scope" value="Bacteria"/>
</dbReference>
<dbReference type="HOGENOM" id="CLU_050555_3_1_10"/>
<dbReference type="Proteomes" id="UP000006731">
    <property type="component" value="Chromosome"/>
</dbReference>
<dbReference type="GO" id="GO:0005737">
    <property type="term" value="C:cytoplasm"/>
    <property type="evidence" value="ECO:0007669"/>
    <property type="project" value="UniProtKB-SubCell"/>
</dbReference>
<dbReference type="GO" id="GO:0005507">
    <property type="term" value="F:copper ion binding"/>
    <property type="evidence" value="ECO:0007669"/>
    <property type="project" value="TreeGrafter"/>
</dbReference>
<dbReference type="FunFam" id="3.20.20.380:FF:000001">
    <property type="entry name" value="Copper homeostasis protein CutC"/>
    <property type="match status" value="1"/>
</dbReference>
<dbReference type="Gene3D" id="3.20.20.380">
    <property type="entry name" value="Copper homeostasis (CutC) domain"/>
    <property type="match status" value="1"/>
</dbReference>
<dbReference type="HAMAP" id="MF_00795">
    <property type="entry name" value="CutC"/>
    <property type="match status" value="1"/>
</dbReference>
<dbReference type="InterPro" id="IPR005627">
    <property type="entry name" value="CutC-like"/>
</dbReference>
<dbReference type="InterPro" id="IPR036822">
    <property type="entry name" value="CutC-like_dom_sf"/>
</dbReference>
<dbReference type="PANTHER" id="PTHR12598">
    <property type="entry name" value="COPPER HOMEOSTASIS PROTEIN CUTC"/>
    <property type="match status" value="1"/>
</dbReference>
<dbReference type="PANTHER" id="PTHR12598:SF0">
    <property type="entry name" value="COPPER HOMEOSTASIS PROTEIN CUTC HOMOLOG"/>
    <property type="match status" value="1"/>
</dbReference>
<dbReference type="Pfam" id="PF03932">
    <property type="entry name" value="CutC"/>
    <property type="match status" value="1"/>
</dbReference>
<dbReference type="SUPFAM" id="SSF110395">
    <property type="entry name" value="CutC-like"/>
    <property type="match status" value="1"/>
</dbReference>
<keyword id="KW-0963">Cytoplasm</keyword>
<protein>
    <recommendedName>
        <fullName evidence="1">PF03932 family protein CutC</fullName>
    </recommendedName>
</protein>
<feature type="chain" id="PRO_1000046933" description="PF03932 family protein CutC">
    <location>
        <begin position="1"/>
        <end position="251"/>
    </location>
</feature>
<gene>
    <name evidence="1" type="primary">cutC</name>
    <name type="ordered locus">BF3404</name>
</gene>
<sequence>MKNYLFEVCTNSVESCIAAQEGGANRVELCAGIPEGGTTPSYGEIAMAREVLTTTRLHVIIRPRGGDFLYSPVEVKTMLKDIEMARQLGADGVVFGCLTTNGGIDVPVMKQLMEASKGLSVTFHRAFDVCRDASEALEQIIDLGCDRILTSGQQATAELGIPLLKELRERANGRITLLAGCGVNEKNICRIAKETGIQEFHFSARESIKSGMEYKNEAVSMGGTVHISEYERNVTTVKRVKDTIESITSSL</sequence>
<name>CUTC_BACFN</name>